<sequence length="225" mass="25259">MNSIEFTLLARRTQNSVISTTSNDLSNWSRLSSLWPLLYGTSCCFIEFASLIGSRFDFDRYGLVPRSSPRQADLILTAGTVTMKMAPSLVRLYEQMPEPKYVIAMGACTITGGMFSTDSYSTVRGVDKLIPVDVYLPGCPPKPEAIIDAITKLRKKISREIYEDRIRSQEENRCFTTNHKFHVGPSMHTGNYDPGLLYQLPSTSEIASETFFKYKSSVSAHELVN</sequence>
<dbReference type="EC" id="7.1.1.-" evidence="1"/>
<dbReference type="EMBL" id="AJ271079">
    <property type="protein sequence ID" value="CAB67131.2"/>
    <property type="molecule type" value="Genomic_DNA"/>
</dbReference>
<dbReference type="RefSeq" id="NP_084666.2">
    <property type="nucleotide sequence ID" value="NC_002693.2"/>
</dbReference>
<dbReference type="SMR" id="Q9MTP4"/>
<dbReference type="GeneID" id="802722"/>
<dbReference type="GO" id="GO:0009535">
    <property type="term" value="C:chloroplast thylakoid membrane"/>
    <property type="evidence" value="ECO:0007669"/>
    <property type="project" value="UniProtKB-SubCell"/>
</dbReference>
<dbReference type="GO" id="GO:0045271">
    <property type="term" value="C:respiratory chain complex I"/>
    <property type="evidence" value="ECO:0007669"/>
    <property type="project" value="TreeGrafter"/>
</dbReference>
<dbReference type="GO" id="GO:0051539">
    <property type="term" value="F:4 iron, 4 sulfur cluster binding"/>
    <property type="evidence" value="ECO:0007669"/>
    <property type="project" value="UniProtKB-KW"/>
</dbReference>
<dbReference type="GO" id="GO:0005506">
    <property type="term" value="F:iron ion binding"/>
    <property type="evidence" value="ECO:0007669"/>
    <property type="project" value="UniProtKB-UniRule"/>
</dbReference>
<dbReference type="GO" id="GO:0008137">
    <property type="term" value="F:NADH dehydrogenase (ubiquinone) activity"/>
    <property type="evidence" value="ECO:0007669"/>
    <property type="project" value="InterPro"/>
</dbReference>
<dbReference type="GO" id="GO:0048038">
    <property type="term" value="F:quinone binding"/>
    <property type="evidence" value="ECO:0007669"/>
    <property type="project" value="UniProtKB-KW"/>
</dbReference>
<dbReference type="GO" id="GO:0009060">
    <property type="term" value="P:aerobic respiration"/>
    <property type="evidence" value="ECO:0007669"/>
    <property type="project" value="TreeGrafter"/>
</dbReference>
<dbReference type="GO" id="GO:0015990">
    <property type="term" value="P:electron transport coupled proton transport"/>
    <property type="evidence" value="ECO:0007669"/>
    <property type="project" value="TreeGrafter"/>
</dbReference>
<dbReference type="GO" id="GO:0019684">
    <property type="term" value="P:photosynthesis, light reaction"/>
    <property type="evidence" value="ECO:0007669"/>
    <property type="project" value="UniProtKB-UniRule"/>
</dbReference>
<dbReference type="FunFam" id="3.40.50.12280:FF:000003">
    <property type="entry name" value="NAD(P)H-quinone oxidoreductase subunit K, chloroplastic"/>
    <property type="match status" value="1"/>
</dbReference>
<dbReference type="Gene3D" id="3.40.50.12280">
    <property type="match status" value="1"/>
</dbReference>
<dbReference type="HAMAP" id="MF_01356">
    <property type="entry name" value="NDH1_NuoB"/>
    <property type="match status" value="1"/>
</dbReference>
<dbReference type="InterPro" id="IPR006137">
    <property type="entry name" value="NADH_UbQ_OxRdtase-like_20kDa"/>
</dbReference>
<dbReference type="InterPro" id="IPR006138">
    <property type="entry name" value="NADH_UQ_OxRdtase_20Kd_su"/>
</dbReference>
<dbReference type="NCBIfam" id="TIGR01957">
    <property type="entry name" value="nuoB_fam"/>
    <property type="match status" value="1"/>
</dbReference>
<dbReference type="NCBIfam" id="NF005012">
    <property type="entry name" value="PRK06411.1"/>
    <property type="match status" value="1"/>
</dbReference>
<dbReference type="PANTHER" id="PTHR11995">
    <property type="entry name" value="NADH DEHYDROGENASE"/>
    <property type="match status" value="1"/>
</dbReference>
<dbReference type="PANTHER" id="PTHR11995:SF14">
    <property type="entry name" value="NADH DEHYDROGENASE [UBIQUINONE] IRON-SULFUR PROTEIN 7, MITOCHONDRIAL"/>
    <property type="match status" value="1"/>
</dbReference>
<dbReference type="Pfam" id="PF01058">
    <property type="entry name" value="Oxidored_q6"/>
    <property type="match status" value="1"/>
</dbReference>
<dbReference type="SUPFAM" id="SSF56770">
    <property type="entry name" value="HydA/Nqo6-like"/>
    <property type="match status" value="1"/>
</dbReference>
<dbReference type="PROSITE" id="PS01150">
    <property type="entry name" value="COMPLEX1_20K"/>
    <property type="match status" value="1"/>
</dbReference>
<protein>
    <recommendedName>
        <fullName evidence="1">NAD(P)H-quinone oxidoreductase subunit K, chloroplastic</fullName>
        <ecNumber evidence="1">7.1.1.-</ecNumber>
    </recommendedName>
    <alternativeName>
        <fullName evidence="1">NAD(P)H dehydrogenase subunit K</fullName>
    </alternativeName>
    <alternativeName>
        <fullName evidence="1">NADH-plastoquinone oxidoreductase subunit K</fullName>
    </alternativeName>
</protein>
<organism>
    <name type="scientific">Oenothera elata subsp. hookeri</name>
    <name type="common">Hooker's evening primrose</name>
    <name type="synonym">Oenothera hookeri</name>
    <dbReference type="NCBI Taxonomy" id="85636"/>
    <lineage>
        <taxon>Eukaryota</taxon>
        <taxon>Viridiplantae</taxon>
        <taxon>Streptophyta</taxon>
        <taxon>Embryophyta</taxon>
        <taxon>Tracheophyta</taxon>
        <taxon>Spermatophyta</taxon>
        <taxon>Magnoliopsida</taxon>
        <taxon>eudicotyledons</taxon>
        <taxon>Gunneridae</taxon>
        <taxon>Pentapetalae</taxon>
        <taxon>rosids</taxon>
        <taxon>malvids</taxon>
        <taxon>Myrtales</taxon>
        <taxon>Onagraceae</taxon>
        <taxon>Onagroideae</taxon>
        <taxon>Onagreae</taxon>
        <taxon>Oenothera</taxon>
    </lineage>
</organism>
<geneLocation type="chloroplast"/>
<name>NDHK_OENEH</name>
<feature type="chain" id="PRO_0000118750" description="NAD(P)H-quinone oxidoreductase subunit K, chloroplastic">
    <location>
        <begin position="1"/>
        <end position="225"/>
    </location>
</feature>
<feature type="binding site" evidence="1">
    <location>
        <position position="43"/>
    </location>
    <ligand>
        <name>[4Fe-4S] cluster</name>
        <dbReference type="ChEBI" id="CHEBI:49883"/>
    </ligand>
</feature>
<feature type="binding site" evidence="1">
    <location>
        <position position="44"/>
    </location>
    <ligand>
        <name>[4Fe-4S] cluster</name>
        <dbReference type="ChEBI" id="CHEBI:49883"/>
    </ligand>
</feature>
<feature type="binding site" evidence="1">
    <location>
        <position position="108"/>
    </location>
    <ligand>
        <name>[4Fe-4S] cluster</name>
        <dbReference type="ChEBI" id="CHEBI:49883"/>
    </ligand>
</feature>
<feature type="binding site" evidence="1">
    <location>
        <position position="139"/>
    </location>
    <ligand>
        <name>[4Fe-4S] cluster</name>
        <dbReference type="ChEBI" id="CHEBI:49883"/>
    </ligand>
</feature>
<reference key="1">
    <citation type="journal article" date="2000" name="Mol. Gen. Genet.">
        <title>Complete nucleotide sequence of the Oenothera elata plastid chromosome, representing plastome I of the five distinguishable Euoenothera plastomes.</title>
        <authorList>
            <person name="Hupfer H."/>
            <person name="Swiatek M."/>
            <person name="Hornung S."/>
            <person name="Herrmann R.G."/>
            <person name="Maier R.M."/>
            <person name="Chiu W.-L."/>
            <person name="Sears B."/>
        </authorList>
    </citation>
    <scope>NUCLEOTIDE SEQUENCE [LARGE SCALE GENOMIC DNA]</scope>
    <source>
        <strain>cv. Johansen</strain>
    </source>
</reference>
<reference key="2">
    <citation type="journal article" date="2008" name="Nucleic Acids Res.">
        <title>The complete nucleotide sequences of the five genetically distinct plastid genomes of Oenothera, subsection Oenothera: I. Sequence evaluation and plastome evolution.</title>
        <authorList>
            <person name="Greiner S."/>
            <person name="Wang X."/>
            <person name="Rauwolf U."/>
            <person name="Silber M.V."/>
            <person name="Mayer K."/>
            <person name="Meurer J."/>
            <person name="Haberer G."/>
            <person name="Herrmann R.G."/>
        </authorList>
    </citation>
    <scope>SEQUENCE REVISION TO N-TERMINUS; 123-138 AND 166</scope>
</reference>
<keyword id="KW-0004">4Fe-4S</keyword>
<keyword id="KW-0150">Chloroplast</keyword>
<keyword id="KW-0408">Iron</keyword>
<keyword id="KW-0411">Iron-sulfur</keyword>
<keyword id="KW-0472">Membrane</keyword>
<keyword id="KW-0479">Metal-binding</keyword>
<keyword id="KW-0520">NAD</keyword>
<keyword id="KW-0521">NADP</keyword>
<keyword id="KW-0934">Plastid</keyword>
<keyword id="KW-0618">Plastoquinone</keyword>
<keyword id="KW-0874">Quinone</keyword>
<keyword id="KW-0793">Thylakoid</keyword>
<keyword id="KW-1278">Translocase</keyword>
<keyword id="KW-0813">Transport</keyword>
<proteinExistence type="inferred from homology"/>
<accession>Q9MTP4</accession>
<gene>
    <name evidence="1" type="primary">ndhK</name>
</gene>
<evidence type="ECO:0000255" key="1">
    <source>
        <dbReference type="HAMAP-Rule" id="MF_01356"/>
    </source>
</evidence>
<comment type="function">
    <text evidence="1">NDH shuttles electrons from NAD(P)H:plastoquinone, via FMN and iron-sulfur (Fe-S) centers, to quinones in the photosynthetic chain and possibly in a chloroplast respiratory chain. The immediate electron acceptor for the enzyme in this species is believed to be plastoquinone. Couples the redox reaction to proton translocation, and thus conserves the redox energy in a proton gradient.</text>
</comment>
<comment type="catalytic activity">
    <reaction evidence="1">
        <text>a plastoquinone + NADH + (n+1) H(+)(in) = a plastoquinol + NAD(+) + n H(+)(out)</text>
        <dbReference type="Rhea" id="RHEA:42608"/>
        <dbReference type="Rhea" id="RHEA-COMP:9561"/>
        <dbReference type="Rhea" id="RHEA-COMP:9562"/>
        <dbReference type="ChEBI" id="CHEBI:15378"/>
        <dbReference type="ChEBI" id="CHEBI:17757"/>
        <dbReference type="ChEBI" id="CHEBI:57540"/>
        <dbReference type="ChEBI" id="CHEBI:57945"/>
        <dbReference type="ChEBI" id="CHEBI:62192"/>
    </reaction>
</comment>
<comment type="catalytic activity">
    <reaction evidence="1">
        <text>a plastoquinone + NADPH + (n+1) H(+)(in) = a plastoquinol + NADP(+) + n H(+)(out)</text>
        <dbReference type="Rhea" id="RHEA:42612"/>
        <dbReference type="Rhea" id="RHEA-COMP:9561"/>
        <dbReference type="Rhea" id="RHEA-COMP:9562"/>
        <dbReference type="ChEBI" id="CHEBI:15378"/>
        <dbReference type="ChEBI" id="CHEBI:17757"/>
        <dbReference type="ChEBI" id="CHEBI:57783"/>
        <dbReference type="ChEBI" id="CHEBI:58349"/>
        <dbReference type="ChEBI" id="CHEBI:62192"/>
    </reaction>
</comment>
<comment type="cofactor">
    <cofactor evidence="1">
        <name>[4Fe-4S] cluster</name>
        <dbReference type="ChEBI" id="CHEBI:49883"/>
    </cofactor>
    <text evidence="1">Binds 1 [4Fe-4S] cluster.</text>
</comment>
<comment type="subunit">
    <text evidence="1">NDH is composed of at least 16 different subunits, 5 of which are encoded in the nucleus.</text>
</comment>
<comment type="subcellular location">
    <subcellularLocation>
        <location evidence="1">Plastid</location>
        <location evidence="1">Chloroplast thylakoid membrane</location>
        <topology evidence="1">Peripheral membrane protein</topology>
        <orientation evidence="1">Stromal side</orientation>
    </subcellularLocation>
</comment>
<comment type="similarity">
    <text evidence="1">Belongs to the complex I 20 kDa subunit family.</text>
</comment>